<reference key="1">
    <citation type="journal article" date="1993" name="Gene">
        <title>Two putative African swine fever virus helicases similar to yeast 'DEAH' pre-mRNA processing proteins and vaccinia virus ATPases D11L and D6R.</title>
        <authorList>
            <person name="Yanez R.J."/>
            <person name="Rodriguez J.M."/>
            <person name="Boursnell M.E."/>
            <person name="Rodriguez J.F."/>
            <person name="Vinuela E."/>
        </authorList>
    </citation>
    <scope>NUCLEOTIDE SEQUENCE [GENOMIC DNA]</scope>
</reference>
<reference key="2">
    <citation type="journal article" date="1995" name="Virology">
        <title>Analysis of the complete nucleotide sequence of African swine fever virus.</title>
        <authorList>
            <person name="Yanez R.J."/>
            <person name="Rodriguez J.M."/>
            <person name="Nogal M.L."/>
            <person name="Yuste L."/>
            <person name="Enriquez C."/>
            <person name="Rodriguez J.F."/>
            <person name="Vinuela E."/>
        </authorList>
    </citation>
    <scope>NUCLEOTIDE SEQUENCE [LARGE SCALE GENOMIC DNA]</scope>
</reference>
<reference key="3">
    <citation type="journal article" date="2013" name="Virus Res.">
        <title>African swine fever virus transcription.</title>
        <authorList>
            <person name="Rodriguez J.M."/>
            <person name="Salas M.L."/>
        </authorList>
    </citation>
    <scope>REVIEW</scope>
</reference>
<reference key="4">
    <citation type="journal article" date="2018" name="J. Virol.">
        <title>A Proteomic Atlas of the African Swine Fever Virus Particle.</title>
        <authorList>
            <person name="Alejo A."/>
            <person name="Matamoros T."/>
            <person name="Guerra M."/>
            <person name="Andres G."/>
        </authorList>
    </citation>
    <scope>SUBCELLULAR LOCATION</scope>
</reference>
<reference key="5">
    <citation type="journal article" date="2020" name="Biochem. Soc. Trans.">
        <title>Transcriptome view of a killer: African swine fever virus.</title>
        <authorList>
            <person name="Cackett G."/>
            <person name="Sykora M."/>
            <person name="Werner F."/>
        </authorList>
    </citation>
    <scope>REVIEW</scope>
</reference>
<reference key="6">
    <citation type="journal article" date="2020" name="J. Virol.">
        <title>The African Swine Fever Virus Transcriptome.</title>
        <authorList>
            <person name="Cackett G."/>
            <person name="Matelska D."/>
            <person name="Sykora M."/>
            <person name="Portugal R."/>
            <person name="Malecki M."/>
            <person name="Baehler J."/>
            <person name="Dixon L."/>
            <person name="Werner F."/>
        </authorList>
    </citation>
    <scope>INDUCTION</scope>
</reference>
<gene>
    <name type="ordered locus">Ba71V-106</name>
    <name type="ORF">D1133L</name>
</gene>
<feature type="chain" id="PRO_0000373107" description="Early transcription factor large subunit homolog">
    <location>
        <begin position="1"/>
        <end position="1133"/>
    </location>
</feature>
<feature type="domain" description="Helicase ATP-binding" evidence="2">
    <location>
        <begin position="52"/>
        <end position="352"/>
    </location>
</feature>
<feature type="domain" description="Helicase C-terminal" evidence="3">
    <location>
        <begin position="524"/>
        <end position="724"/>
    </location>
</feature>
<feature type="short sequence motif" description="DEAH box">
    <location>
        <begin position="281"/>
        <end position="284"/>
    </location>
</feature>
<feature type="binding site" evidence="2">
    <location>
        <begin position="99"/>
        <end position="106"/>
    </location>
    <ligand>
        <name>ATP</name>
        <dbReference type="ChEBI" id="CHEBI:30616"/>
    </ligand>
</feature>
<accession>Q89525</accession>
<evidence type="ECO:0000250" key="1">
    <source>
        <dbReference type="UniProtKB" id="P04308"/>
    </source>
</evidence>
<evidence type="ECO:0000255" key="2">
    <source>
        <dbReference type="PROSITE-ProRule" id="PRU00541"/>
    </source>
</evidence>
<evidence type="ECO:0000255" key="3">
    <source>
        <dbReference type="PROSITE-ProRule" id="PRU00542"/>
    </source>
</evidence>
<evidence type="ECO:0000269" key="4">
    <source>
    </source>
</evidence>
<evidence type="ECO:0000269" key="5">
    <source>
    </source>
</evidence>
<evidence type="ECO:0000303" key="6">
    <source>
    </source>
</evidence>
<evidence type="ECO:0000303" key="7">
    <source>
    </source>
</evidence>
<evidence type="ECO:0000305" key="8"/>
<comment type="function">
    <text evidence="1">Putative initation factor.</text>
</comment>
<comment type="catalytic activity">
    <reaction evidence="1">
        <text>ATP + H2O = ADP + phosphate + H(+)</text>
        <dbReference type="Rhea" id="RHEA:13065"/>
        <dbReference type="ChEBI" id="CHEBI:15377"/>
        <dbReference type="ChEBI" id="CHEBI:15378"/>
        <dbReference type="ChEBI" id="CHEBI:30616"/>
        <dbReference type="ChEBI" id="CHEBI:43474"/>
        <dbReference type="ChEBI" id="CHEBI:456216"/>
        <dbReference type="EC" id="3.6.4.13"/>
    </reaction>
</comment>
<comment type="subcellular location">
    <subcellularLocation>
        <location evidence="4">Virion</location>
    </subcellularLocation>
    <text evidence="4">Found in association with viral nucleoid.</text>
</comment>
<comment type="induction">
    <text evidence="5">Expressed in the late phase of the viral replicative cycle.</text>
</comment>
<comment type="similarity">
    <text evidence="8">Belongs to the DEAD box helicase family. DEAH subfamily.</text>
</comment>
<proteinExistence type="evidence at transcript level"/>
<name>ETFS_ASFB7</name>
<organismHost>
    <name type="scientific">Ornithodoros</name>
    <name type="common">relapsing fever ticks</name>
    <dbReference type="NCBI Taxonomy" id="6937"/>
</organismHost>
<organismHost>
    <name type="scientific">Sus scrofa</name>
    <name type="common">Pig</name>
    <dbReference type="NCBI Taxonomy" id="9823"/>
</organismHost>
<dbReference type="EC" id="3.6.4.13"/>
<dbReference type="EMBL" id="L10061">
    <property type="protein sequence ID" value="AAA42697.1"/>
    <property type="molecule type" value="Genomic_DNA"/>
</dbReference>
<dbReference type="EMBL" id="U18466">
    <property type="protein sequence ID" value="AAA65335.1"/>
    <property type="molecule type" value="Genomic_DNA"/>
</dbReference>
<dbReference type="PIR" id="JT0665">
    <property type="entry name" value="JT0665"/>
</dbReference>
<dbReference type="RefSeq" id="NP_042799.1">
    <property type="nucleotide sequence ID" value="NC_001659.2"/>
</dbReference>
<dbReference type="GeneID" id="22220335"/>
<dbReference type="KEGG" id="vg:22220335"/>
<dbReference type="Proteomes" id="UP000000624">
    <property type="component" value="Segment"/>
</dbReference>
<dbReference type="GO" id="GO:0044423">
    <property type="term" value="C:virion component"/>
    <property type="evidence" value="ECO:0007669"/>
    <property type="project" value="UniProtKB-KW"/>
</dbReference>
<dbReference type="GO" id="GO:0005524">
    <property type="term" value="F:ATP binding"/>
    <property type="evidence" value="ECO:0007669"/>
    <property type="project" value="UniProtKB-KW"/>
</dbReference>
<dbReference type="GO" id="GO:0016887">
    <property type="term" value="F:ATP hydrolysis activity"/>
    <property type="evidence" value="ECO:0007669"/>
    <property type="project" value="RHEA"/>
</dbReference>
<dbReference type="GO" id="GO:0003677">
    <property type="term" value="F:DNA binding"/>
    <property type="evidence" value="ECO:0007669"/>
    <property type="project" value="UniProtKB-KW"/>
</dbReference>
<dbReference type="GO" id="GO:0003724">
    <property type="term" value="F:RNA helicase activity"/>
    <property type="evidence" value="ECO:0007669"/>
    <property type="project" value="UniProtKB-EC"/>
</dbReference>
<dbReference type="Gene3D" id="3.40.50.300">
    <property type="entry name" value="P-loop containing nucleotide triphosphate hydrolases"/>
    <property type="match status" value="2"/>
</dbReference>
<dbReference type="InterPro" id="IPR001650">
    <property type="entry name" value="Helicase_C-like"/>
</dbReference>
<dbReference type="InterPro" id="IPR027417">
    <property type="entry name" value="P-loop_NTPase"/>
</dbReference>
<dbReference type="Pfam" id="PF00271">
    <property type="entry name" value="Helicase_C"/>
    <property type="match status" value="1"/>
</dbReference>
<dbReference type="SMART" id="SM00490">
    <property type="entry name" value="HELICc"/>
    <property type="match status" value="1"/>
</dbReference>
<dbReference type="SUPFAM" id="SSF52540">
    <property type="entry name" value="P-loop containing nucleoside triphosphate hydrolases"/>
    <property type="match status" value="1"/>
</dbReference>
<dbReference type="PROSITE" id="PS51192">
    <property type="entry name" value="HELICASE_ATP_BIND_1"/>
    <property type="match status" value="1"/>
</dbReference>
<dbReference type="PROSITE" id="PS51194">
    <property type="entry name" value="HELICASE_CTER"/>
    <property type="match status" value="1"/>
</dbReference>
<sequence length="1133" mass="129268">MAYPELDAADFLQQLARRKEFKSLISPPVDQKELIRDLRAHFVQIGGPGCEKGGRAFFPCDPYASPFPSIKGLQLHNAQLFVQNFQNPNTPYSRLLLNWQTGTGKSIAAIAIARQFMNHYMNFIENAPWIFVVGFTRAIIQTEMLRRPELGFVSYKEVAELHRLLHIAKQSGSTTSVESRHLNGFVSTLKRRLTDRNRGGFFQFYGYKEFASKLFNITSKGEEKNFDVLSLFHRSDEAEDTLNENDISQFVQKISEAETNGLIRVNQKIMEQLRGGLLIADEIHNVYNIQERNNYGIALQYVLDAFPPHQAPRAVFMSATPVTGSVMEYVDLLNLLVPRHELPNGQPLQRQQLFDSSGHSVKWKKDALALVERLSTGRVSFLLDTNTNFYPERIFAGKMLSYKDETLPYLHFIECPMSEYQLETLKQLGPDPKISSNAYSIYDMVFPNPKFSKQTEPKAYGLFNSTETPTALSMASTDWLLENGVQIIEPSRRAPFNVSGSFLSLQPPTHISGLAFYSGKYTQMMKDILSIIRQGRGKILIYHNRVRMSGVLILQEILQSNGILNEVSSPVGTTRCSICAAIRDEHTHSDHQFIPVRFTILHSEIEPAVRERSLALFNASSNLEGHQLRILIGSKVIVEGLNFQAVRYEMIMSLPLDIPRLIQVFGRVVRKNSHMELPPSERNVTIYLYVSTTPDGGPELAKYAQKLKEYILIQEGDKALRKHAIDGFTNQIKIDKPMLESLPLSPSITPANVGATVLNTFEAYGYGEQEVKTISNIIISLFMARPVWTYSELWKAVSTPKLIQGITIDNKLFSEDNFALALISLCYSKNQCKELWIQNRLCTIMHVPAKPEHLYVAAVLNHKKEPVLDIETYIRDFQLPAMHSIRITKYLEHSQTKEPFQVLYEKFQKDFQDEPMEQVLIHYPASFHYTMLEALIIDNLAGMGALVEVYKKFFIAFSKKDIQPFPDIFKIISHVPGDDNTLVGYATEDSVRLITSREDKTWHEIPLYMLNINVKRKENDIVIGYMESKGKALKFKIRPPIQVLKKNEITDIRMLNRGAVCETRGREEQQKIADQLGISLNLTKISAIKLCLLIRNNLLQKEMEARNQPNGMQDGIRWFYLFNDKMPSLVHTS</sequence>
<keyword id="KW-0067">ATP-binding</keyword>
<keyword id="KW-0238">DNA-binding</keyword>
<keyword id="KW-0347">Helicase</keyword>
<keyword id="KW-0378">Hydrolase</keyword>
<keyword id="KW-0426">Late protein</keyword>
<keyword id="KW-0547">Nucleotide-binding</keyword>
<keyword id="KW-1185">Reference proteome</keyword>
<keyword id="KW-0804">Transcription</keyword>
<keyword id="KW-0805">Transcription regulation</keyword>
<keyword id="KW-0946">Virion</keyword>
<organism>
    <name type="scientific">African swine fever virus (strain Badajoz 1971 Vero-adapted)</name>
    <name type="common">Ba71V</name>
    <name type="synonym">ASFV</name>
    <dbReference type="NCBI Taxonomy" id="10498"/>
    <lineage>
        <taxon>Viruses</taxon>
        <taxon>Varidnaviria</taxon>
        <taxon>Bamfordvirae</taxon>
        <taxon>Nucleocytoviricota</taxon>
        <taxon>Pokkesviricetes</taxon>
        <taxon>Asfuvirales</taxon>
        <taxon>Asfarviridae</taxon>
        <taxon>Asfivirus</taxon>
        <taxon>African swine fever virus</taxon>
    </lineage>
</organism>
<protein>
    <recommendedName>
        <fullName evidence="6 7">Early transcription factor large subunit homolog</fullName>
        <ecNumber>3.6.4.13</ecNumber>
    </recommendedName>
    <alternativeName>
        <fullName evidence="7">ATP-dependent helicase VETFS homolog</fullName>
    </alternativeName>
</protein>